<proteinExistence type="evidence at protein level"/>
<keyword id="KW-0002">3D-structure</keyword>
<keyword id="KW-0020">Allergen</keyword>
<keyword id="KW-0903">Direct protein sequencing</keyword>
<sequence length="63" mass="6900">AHIDCDKECNRRCSKASAHDRCLKYCGICCEKCNCVPPGTYGNEDSCPCYANLKNSKGGHKCP</sequence>
<protein>
    <recommendedName>
        <fullName evidence="1">Cypmaclein</fullName>
    </recommendedName>
    <allergenName evidence="3">Cry j 7</allergenName>
</protein>
<reference evidence="4" key="1">
    <citation type="journal article" date="2020" name="Clin. Exp. Allergy">
        <title>Characterization of a 7 kDa pollen allergen belonging to the gibberellin-regulated protein family from three Cupressaceae species.</title>
        <authorList>
            <person name="Ehrenberg A.E."/>
            <person name="Klingebiel C."/>
            <person name="Oestling J."/>
            <person name="Larsson H."/>
            <person name="Mattsson L."/>
            <person name="Vitte J."/>
            <person name="Lidholm J."/>
        </authorList>
    </citation>
    <scope>PROTEIN SEQUENCE</scope>
    <scope>TISSUE SPECIFICITY</scope>
    <scope>MASS SPECTROMETRY</scope>
    <scope>ALLERGEN</scope>
    <source>
        <tissue evidence="3">Pollen</tissue>
    </source>
</reference>
<accession>C0HLQ1</accession>
<name>CMLN_CRYJA</name>
<organism>
    <name type="scientific">Cryptomeria japonica</name>
    <name type="common">Japanese cedar</name>
    <name type="synonym">Cupressus japonica</name>
    <dbReference type="NCBI Taxonomy" id="3369"/>
    <lineage>
        <taxon>Eukaryota</taxon>
        <taxon>Viridiplantae</taxon>
        <taxon>Streptophyta</taxon>
        <taxon>Embryophyta</taxon>
        <taxon>Tracheophyta</taxon>
        <taxon>Spermatophyta</taxon>
        <taxon>Pinopsida</taxon>
        <taxon>Pinidae</taxon>
        <taxon>Conifers II</taxon>
        <taxon>Cupressales</taxon>
        <taxon>Cupressaceae</taxon>
        <taxon>Cryptomeria</taxon>
    </lineage>
</organism>
<dbReference type="PDB" id="8X0R">
    <property type="method" value="NMR"/>
    <property type="chains" value="A=1-63"/>
</dbReference>
<dbReference type="PDBsum" id="8X0R"/>
<dbReference type="SMR" id="C0HLQ1"/>
<dbReference type="InterPro" id="IPR003854">
    <property type="entry name" value="GASA"/>
</dbReference>
<dbReference type="PANTHER" id="PTHR23201">
    <property type="entry name" value="EXTENSIN, PROLINE-RICH PROTEIN"/>
    <property type="match status" value="1"/>
</dbReference>
<dbReference type="Pfam" id="PF02704">
    <property type="entry name" value="GASA"/>
    <property type="match status" value="1"/>
</dbReference>
<comment type="tissue specificity">
    <text evidence="2">Expressed in pollen (at protein level).</text>
</comment>
<comment type="mass spectrometry" mass="6894.95" method="Electrospray" evidence="2"/>
<comment type="allergen">
    <text evidence="2">Causes an allergic reaction in human. Binds to IgE of patients allergic to peach and sensitized to cypress pollen.</text>
</comment>
<comment type="similarity">
    <text evidence="4">Belongs to the GASA family.</text>
</comment>
<feature type="chain" id="PRO_0000451768" description="Cypmaclein">
    <location>
        <begin position="1"/>
        <end position="63"/>
    </location>
</feature>
<evidence type="ECO:0000250" key="1">
    <source>
        <dbReference type="UniProtKB" id="C0HLL6"/>
    </source>
</evidence>
<evidence type="ECO:0000269" key="2">
    <source>
    </source>
</evidence>
<evidence type="ECO:0000303" key="3">
    <source>
    </source>
</evidence>
<evidence type="ECO:0000305" key="4"/>